<name>ACYP_STAAS</name>
<comment type="catalytic activity">
    <reaction>
        <text>an acyl phosphate + H2O = a carboxylate + phosphate + H(+)</text>
        <dbReference type="Rhea" id="RHEA:14965"/>
        <dbReference type="ChEBI" id="CHEBI:15377"/>
        <dbReference type="ChEBI" id="CHEBI:15378"/>
        <dbReference type="ChEBI" id="CHEBI:29067"/>
        <dbReference type="ChEBI" id="CHEBI:43474"/>
        <dbReference type="ChEBI" id="CHEBI:59918"/>
        <dbReference type="EC" id="3.6.1.7"/>
    </reaction>
</comment>
<comment type="similarity">
    <text evidence="2">Belongs to the acylphosphatase family.</text>
</comment>
<proteinExistence type="inferred from homology"/>
<protein>
    <recommendedName>
        <fullName>Acylphosphatase</fullName>
        <ecNumber>3.6.1.7</ecNumber>
    </recommendedName>
    <alternativeName>
        <fullName>Acylphosphate phosphohydrolase</fullName>
    </alternativeName>
</protein>
<accession>Q6G9F7</accession>
<reference key="1">
    <citation type="journal article" date="2004" name="Proc. Natl. Acad. Sci. U.S.A.">
        <title>Complete genomes of two clinical Staphylococcus aureus strains: evidence for the rapid evolution of virulence and drug resistance.</title>
        <authorList>
            <person name="Holden M.T.G."/>
            <person name="Feil E.J."/>
            <person name="Lindsay J.A."/>
            <person name="Peacock S.J."/>
            <person name="Day N.P.J."/>
            <person name="Enright M.C."/>
            <person name="Foster T.J."/>
            <person name="Moore C.E."/>
            <person name="Hurst L."/>
            <person name="Atkin R."/>
            <person name="Barron A."/>
            <person name="Bason N."/>
            <person name="Bentley S.D."/>
            <person name="Chillingworth C."/>
            <person name="Chillingworth T."/>
            <person name="Churcher C."/>
            <person name="Clark L."/>
            <person name="Corton C."/>
            <person name="Cronin A."/>
            <person name="Doggett J."/>
            <person name="Dowd L."/>
            <person name="Feltwell T."/>
            <person name="Hance Z."/>
            <person name="Harris B."/>
            <person name="Hauser H."/>
            <person name="Holroyd S."/>
            <person name="Jagels K."/>
            <person name="James K.D."/>
            <person name="Lennard N."/>
            <person name="Line A."/>
            <person name="Mayes R."/>
            <person name="Moule S."/>
            <person name="Mungall K."/>
            <person name="Ormond D."/>
            <person name="Quail M.A."/>
            <person name="Rabbinowitsch E."/>
            <person name="Rutherford K.M."/>
            <person name="Sanders M."/>
            <person name="Sharp S."/>
            <person name="Simmonds M."/>
            <person name="Stevens K."/>
            <person name="Whitehead S."/>
            <person name="Barrell B.G."/>
            <person name="Spratt B.G."/>
            <person name="Parkhill J."/>
        </authorList>
    </citation>
    <scope>NUCLEOTIDE SEQUENCE [LARGE SCALE GENOMIC DNA]</scope>
    <source>
        <strain>MSSA476</strain>
    </source>
</reference>
<evidence type="ECO:0000255" key="1">
    <source>
        <dbReference type="PROSITE-ProRule" id="PRU00520"/>
    </source>
</evidence>
<evidence type="ECO:0000305" key="2"/>
<feature type="chain" id="PRO_0000326811" description="Acylphosphatase">
    <location>
        <begin position="1"/>
        <end position="89"/>
    </location>
</feature>
<feature type="domain" description="Acylphosphatase-like" evidence="1">
    <location>
        <begin position="3"/>
        <end position="89"/>
    </location>
</feature>
<feature type="active site" evidence="1">
    <location>
        <position position="18"/>
    </location>
</feature>
<feature type="active site" evidence="1">
    <location>
        <position position="36"/>
    </location>
</feature>
<gene>
    <name type="primary">acyP</name>
    <name type="ordered locus">SAS1345</name>
</gene>
<organism>
    <name type="scientific">Staphylococcus aureus (strain MSSA476)</name>
    <dbReference type="NCBI Taxonomy" id="282459"/>
    <lineage>
        <taxon>Bacteria</taxon>
        <taxon>Bacillati</taxon>
        <taxon>Bacillota</taxon>
        <taxon>Bacilli</taxon>
        <taxon>Bacillales</taxon>
        <taxon>Staphylococcaceae</taxon>
        <taxon>Staphylococcus</taxon>
    </lineage>
</organism>
<sequence length="89" mass="10160">MRHIHLQVFGRVQGVGFRYFTQRIAMNYNIVGTVQNVDDYVEIYAQGDDADIERFIQGVIEGASPASNVTSHQLEELELNQKLSDFRSI</sequence>
<dbReference type="EC" id="3.6.1.7"/>
<dbReference type="EMBL" id="BX571857">
    <property type="protein sequence ID" value="CAG43121.1"/>
    <property type="molecule type" value="Genomic_DNA"/>
</dbReference>
<dbReference type="RefSeq" id="WP_001215907.1">
    <property type="nucleotide sequence ID" value="NC_002953.3"/>
</dbReference>
<dbReference type="SMR" id="Q6G9F7"/>
<dbReference type="KEGG" id="sas:SAS1345"/>
<dbReference type="HOGENOM" id="CLU_141932_2_1_9"/>
<dbReference type="GO" id="GO:0003998">
    <property type="term" value="F:acylphosphatase activity"/>
    <property type="evidence" value="ECO:0007669"/>
    <property type="project" value="UniProtKB-EC"/>
</dbReference>
<dbReference type="GO" id="GO:0016743">
    <property type="term" value="F:carboxyl- or carbamoyltransferase activity"/>
    <property type="evidence" value="ECO:0007669"/>
    <property type="project" value="TreeGrafter"/>
</dbReference>
<dbReference type="GO" id="GO:0008270">
    <property type="term" value="F:zinc ion binding"/>
    <property type="evidence" value="ECO:0007669"/>
    <property type="project" value="TreeGrafter"/>
</dbReference>
<dbReference type="GO" id="GO:0051604">
    <property type="term" value="P:protein maturation"/>
    <property type="evidence" value="ECO:0007669"/>
    <property type="project" value="TreeGrafter"/>
</dbReference>
<dbReference type="Gene3D" id="3.30.70.100">
    <property type="match status" value="1"/>
</dbReference>
<dbReference type="InterPro" id="IPR001792">
    <property type="entry name" value="Acylphosphatase-like_dom"/>
</dbReference>
<dbReference type="InterPro" id="IPR036046">
    <property type="entry name" value="Acylphosphatase-like_dom_sf"/>
</dbReference>
<dbReference type="InterPro" id="IPR017968">
    <property type="entry name" value="Acylphosphatase_CS"/>
</dbReference>
<dbReference type="InterPro" id="IPR051060">
    <property type="entry name" value="Carbamoyltrans_HypF-like"/>
</dbReference>
<dbReference type="NCBIfam" id="NF011005">
    <property type="entry name" value="PRK14431.1"/>
    <property type="match status" value="1"/>
</dbReference>
<dbReference type="PANTHER" id="PTHR42959">
    <property type="entry name" value="CARBAMOYLTRANSFERASE"/>
    <property type="match status" value="1"/>
</dbReference>
<dbReference type="PANTHER" id="PTHR42959:SF1">
    <property type="entry name" value="CARBAMOYLTRANSFERASE HYPF"/>
    <property type="match status" value="1"/>
</dbReference>
<dbReference type="Pfam" id="PF00708">
    <property type="entry name" value="Acylphosphatase"/>
    <property type="match status" value="1"/>
</dbReference>
<dbReference type="SUPFAM" id="SSF54975">
    <property type="entry name" value="Acylphosphatase/BLUF domain-like"/>
    <property type="match status" value="1"/>
</dbReference>
<dbReference type="PROSITE" id="PS00150">
    <property type="entry name" value="ACYLPHOSPHATASE_1"/>
    <property type="match status" value="1"/>
</dbReference>
<dbReference type="PROSITE" id="PS51160">
    <property type="entry name" value="ACYLPHOSPHATASE_3"/>
    <property type="match status" value="1"/>
</dbReference>
<keyword id="KW-0378">Hydrolase</keyword>